<sequence>MEDIKTTWQKIIADTLNGIAPETCDKILPEQINIETPPNPEMGDVAFPLFTFAKSFKSSPAKIASDVCARLLENEDIKKYGMPKAIGPYLNVFLAKGDLASNVLDKVLKEKENYGKTSSLSGKRIMIEFSSPNTNKPLHLGHLRNDALGESISRILKFCGADVFKVNIINDRGVHICKSMIAYQKFGEGKTPESENIKSDRFVGDMYVAFHKYSQENPEKAEAEAKQMLLDWEAGENKELIGLWKKMNGWAIEGIKETYKRTGISFDKLYFESETYLKGKDQILKGLEAGVFYKEEDGSVWVDLAPIKLDKKVLLRSDGTSLYMTQDIGTAISRHKDWPFNQMIYVVGNEQEYHFKVLFYVLKQLGFEWADDLYHLSYGMVNLPEGKMKSREGTVVDADDLINSLQDEALKKIEENGREKEVGDAAVAAENIAVGALHYFLLQVSPKKDMLFNPKESLSFTGNTGPYLQYMGARISSILRKAETAEGKEKLKDGKLNASLLTNESEWELLKTLEDFPEQVERSALRKDPSALTAYLYELSKAFSRFYRDCPILSGEDADLSYTRMELARATKIVLQNAMNLVLIPFMEVM</sequence>
<comment type="catalytic activity">
    <reaction evidence="1">
        <text>tRNA(Arg) + L-arginine + ATP = L-arginyl-tRNA(Arg) + AMP + diphosphate</text>
        <dbReference type="Rhea" id="RHEA:20301"/>
        <dbReference type="Rhea" id="RHEA-COMP:9658"/>
        <dbReference type="Rhea" id="RHEA-COMP:9673"/>
        <dbReference type="ChEBI" id="CHEBI:30616"/>
        <dbReference type="ChEBI" id="CHEBI:32682"/>
        <dbReference type="ChEBI" id="CHEBI:33019"/>
        <dbReference type="ChEBI" id="CHEBI:78442"/>
        <dbReference type="ChEBI" id="CHEBI:78513"/>
        <dbReference type="ChEBI" id="CHEBI:456215"/>
        <dbReference type="EC" id="6.1.1.19"/>
    </reaction>
</comment>
<comment type="subunit">
    <text evidence="1">Monomer.</text>
</comment>
<comment type="subcellular location">
    <subcellularLocation>
        <location evidence="1">Cytoplasm</location>
    </subcellularLocation>
</comment>
<comment type="similarity">
    <text evidence="1">Belongs to the class-I aminoacyl-tRNA synthetase family.</text>
</comment>
<reference key="1">
    <citation type="journal article" date="2004" name="Proc. Natl. Acad. Sci. U.S.A.">
        <title>Comparison of the genome of the oral pathogen Treponema denticola with other spirochete genomes.</title>
        <authorList>
            <person name="Seshadri R."/>
            <person name="Myers G.S.A."/>
            <person name="Tettelin H."/>
            <person name="Eisen J.A."/>
            <person name="Heidelberg J.F."/>
            <person name="Dodson R.J."/>
            <person name="Davidsen T.M."/>
            <person name="DeBoy R.T."/>
            <person name="Fouts D.E."/>
            <person name="Haft D.H."/>
            <person name="Selengut J."/>
            <person name="Ren Q."/>
            <person name="Brinkac L.M."/>
            <person name="Madupu R."/>
            <person name="Kolonay J.F."/>
            <person name="Durkin S.A."/>
            <person name="Daugherty S.C."/>
            <person name="Shetty J."/>
            <person name="Shvartsbeyn A."/>
            <person name="Gebregeorgis E."/>
            <person name="Geer K."/>
            <person name="Tsegaye G."/>
            <person name="Malek J.A."/>
            <person name="Ayodeji B."/>
            <person name="Shatsman S."/>
            <person name="McLeod M.P."/>
            <person name="Smajs D."/>
            <person name="Howell J.K."/>
            <person name="Pal S."/>
            <person name="Amin A."/>
            <person name="Vashisth P."/>
            <person name="McNeill T.Z."/>
            <person name="Xiang Q."/>
            <person name="Sodergren E."/>
            <person name="Baca E."/>
            <person name="Weinstock G.M."/>
            <person name="Norris S.J."/>
            <person name="Fraser C.M."/>
            <person name="Paulsen I.T."/>
        </authorList>
    </citation>
    <scope>NUCLEOTIDE SEQUENCE [LARGE SCALE GENOMIC DNA]</scope>
    <source>
        <strain>ATCC 35405 / DSM 14222 / CIP 103919 / JCM 8153 / KCTC 15104</strain>
    </source>
</reference>
<organism>
    <name type="scientific">Treponema denticola (strain ATCC 35405 / DSM 14222 / CIP 103919 / JCM 8153 / KCTC 15104)</name>
    <dbReference type="NCBI Taxonomy" id="243275"/>
    <lineage>
        <taxon>Bacteria</taxon>
        <taxon>Pseudomonadati</taxon>
        <taxon>Spirochaetota</taxon>
        <taxon>Spirochaetia</taxon>
        <taxon>Spirochaetales</taxon>
        <taxon>Treponemataceae</taxon>
        <taxon>Treponema</taxon>
    </lineage>
</organism>
<proteinExistence type="inferred from homology"/>
<dbReference type="EC" id="6.1.1.19" evidence="1"/>
<dbReference type="EMBL" id="AE017226">
    <property type="protein sequence ID" value="AAS11462.1"/>
    <property type="molecule type" value="Genomic_DNA"/>
</dbReference>
<dbReference type="RefSeq" id="NP_971581.1">
    <property type="nucleotide sequence ID" value="NC_002967.9"/>
</dbReference>
<dbReference type="RefSeq" id="WP_002682282.1">
    <property type="nucleotide sequence ID" value="NC_002967.9"/>
</dbReference>
<dbReference type="SMR" id="Q73P28"/>
<dbReference type="STRING" id="243275.TDE_0971"/>
<dbReference type="PaxDb" id="243275-TDE_0971"/>
<dbReference type="GeneID" id="2740543"/>
<dbReference type="KEGG" id="tde:TDE_0971"/>
<dbReference type="PATRIC" id="fig|243275.7.peg.935"/>
<dbReference type="eggNOG" id="COG0018">
    <property type="taxonomic scope" value="Bacteria"/>
</dbReference>
<dbReference type="HOGENOM" id="CLU_006406_6_1_12"/>
<dbReference type="OrthoDB" id="9805987at2"/>
<dbReference type="Proteomes" id="UP000008212">
    <property type="component" value="Chromosome"/>
</dbReference>
<dbReference type="GO" id="GO:0005737">
    <property type="term" value="C:cytoplasm"/>
    <property type="evidence" value="ECO:0007669"/>
    <property type="project" value="UniProtKB-SubCell"/>
</dbReference>
<dbReference type="GO" id="GO:0004814">
    <property type="term" value="F:arginine-tRNA ligase activity"/>
    <property type="evidence" value="ECO:0007669"/>
    <property type="project" value="UniProtKB-UniRule"/>
</dbReference>
<dbReference type="GO" id="GO:0005524">
    <property type="term" value="F:ATP binding"/>
    <property type="evidence" value="ECO:0007669"/>
    <property type="project" value="UniProtKB-UniRule"/>
</dbReference>
<dbReference type="GO" id="GO:0006420">
    <property type="term" value="P:arginyl-tRNA aminoacylation"/>
    <property type="evidence" value="ECO:0007669"/>
    <property type="project" value="UniProtKB-UniRule"/>
</dbReference>
<dbReference type="CDD" id="cd00671">
    <property type="entry name" value="ArgRS_core"/>
    <property type="match status" value="1"/>
</dbReference>
<dbReference type="FunFam" id="1.10.730.10:FF:000006">
    <property type="entry name" value="Arginyl-tRNA synthetase 2, mitochondrial"/>
    <property type="match status" value="1"/>
</dbReference>
<dbReference type="Gene3D" id="3.30.1360.70">
    <property type="entry name" value="Arginyl tRNA synthetase N-terminal domain"/>
    <property type="match status" value="1"/>
</dbReference>
<dbReference type="Gene3D" id="3.40.50.620">
    <property type="entry name" value="HUPs"/>
    <property type="match status" value="1"/>
</dbReference>
<dbReference type="Gene3D" id="1.10.730.10">
    <property type="entry name" value="Isoleucyl-tRNA Synthetase, Domain 1"/>
    <property type="match status" value="1"/>
</dbReference>
<dbReference type="HAMAP" id="MF_00123">
    <property type="entry name" value="Arg_tRNA_synth"/>
    <property type="match status" value="1"/>
</dbReference>
<dbReference type="InterPro" id="IPR001412">
    <property type="entry name" value="aa-tRNA-synth_I_CS"/>
</dbReference>
<dbReference type="InterPro" id="IPR001278">
    <property type="entry name" value="Arg-tRNA-ligase"/>
</dbReference>
<dbReference type="InterPro" id="IPR005148">
    <property type="entry name" value="Arg-tRNA-synth_N"/>
</dbReference>
<dbReference type="InterPro" id="IPR036695">
    <property type="entry name" value="Arg-tRNA-synth_N_sf"/>
</dbReference>
<dbReference type="InterPro" id="IPR035684">
    <property type="entry name" value="ArgRS_core"/>
</dbReference>
<dbReference type="InterPro" id="IPR008909">
    <property type="entry name" value="DALR_anticod-bd"/>
</dbReference>
<dbReference type="InterPro" id="IPR014729">
    <property type="entry name" value="Rossmann-like_a/b/a_fold"/>
</dbReference>
<dbReference type="InterPro" id="IPR009080">
    <property type="entry name" value="tRNAsynth_Ia_anticodon-bd"/>
</dbReference>
<dbReference type="NCBIfam" id="TIGR00456">
    <property type="entry name" value="argS"/>
    <property type="match status" value="1"/>
</dbReference>
<dbReference type="PANTHER" id="PTHR11956:SF5">
    <property type="entry name" value="ARGININE--TRNA LIGASE, CYTOPLASMIC"/>
    <property type="match status" value="1"/>
</dbReference>
<dbReference type="PANTHER" id="PTHR11956">
    <property type="entry name" value="ARGINYL-TRNA SYNTHETASE"/>
    <property type="match status" value="1"/>
</dbReference>
<dbReference type="Pfam" id="PF03485">
    <property type="entry name" value="Arg_tRNA_synt_N"/>
    <property type="match status" value="1"/>
</dbReference>
<dbReference type="Pfam" id="PF05746">
    <property type="entry name" value="DALR_1"/>
    <property type="match status" value="1"/>
</dbReference>
<dbReference type="Pfam" id="PF00750">
    <property type="entry name" value="tRNA-synt_1d"/>
    <property type="match status" value="1"/>
</dbReference>
<dbReference type="PRINTS" id="PR01038">
    <property type="entry name" value="TRNASYNTHARG"/>
</dbReference>
<dbReference type="SMART" id="SM01016">
    <property type="entry name" value="Arg_tRNA_synt_N"/>
    <property type="match status" value="1"/>
</dbReference>
<dbReference type="SMART" id="SM00836">
    <property type="entry name" value="DALR_1"/>
    <property type="match status" value="1"/>
</dbReference>
<dbReference type="SUPFAM" id="SSF47323">
    <property type="entry name" value="Anticodon-binding domain of a subclass of class I aminoacyl-tRNA synthetases"/>
    <property type="match status" value="1"/>
</dbReference>
<dbReference type="SUPFAM" id="SSF55190">
    <property type="entry name" value="Arginyl-tRNA synthetase (ArgRS), N-terminal 'additional' domain"/>
    <property type="match status" value="1"/>
</dbReference>
<dbReference type="SUPFAM" id="SSF52374">
    <property type="entry name" value="Nucleotidylyl transferase"/>
    <property type="match status" value="1"/>
</dbReference>
<dbReference type="PROSITE" id="PS00178">
    <property type="entry name" value="AA_TRNA_LIGASE_I"/>
    <property type="match status" value="1"/>
</dbReference>
<protein>
    <recommendedName>
        <fullName evidence="1">Arginine--tRNA ligase</fullName>
        <ecNumber evidence="1">6.1.1.19</ecNumber>
    </recommendedName>
    <alternativeName>
        <fullName evidence="1">Arginyl-tRNA synthetase</fullName>
        <shortName evidence="1">ArgRS</shortName>
    </alternativeName>
</protein>
<evidence type="ECO:0000255" key="1">
    <source>
        <dbReference type="HAMAP-Rule" id="MF_00123"/>
    </source>
</evidence>
<keyword id="KW-0030">Aminoacyl-tRNA synthetase</keyword>
<keyword id="KW-0067">ATP-binding</keyword>
<keyword id="KW-0963">Cytoplasm</keyword>
<keyword id="KW-0436">Ligase</keyword>
<keyword id="KW-0547">Nucleotide-binding</keyword>
<keyword id="KW-0648">Protein biosynthesis</keyword>
<keyword id="KW-1185">Reference proteome</keyword>
<accession>Q73P28</accession>
<feature type="chain" id="PRO_0000242116" description="Arginine--tRNA ligase">
    <location>
        <begin position="1"/>
        <end position="590"/>
    </location>
</feature>
<feature type="short sequence motif" description="'HIGH' region">
    <location>
        <begin position="132"/>
        <end position="142"/>
    </location>
</feature>
<gene>
    <name evidence="1" type="primary">argS</name>
    <name type="ordered locus">TDE_0971</name>
</gene>
<name>SYR_TREDE</name>